<evidence type="ECO:0000255" key="1">
    <source>
        <dbReference type="HAMAP-Rule" id="MF_00652"/>
    </source>
</evidence>
<comment type="similarity">
    <text evidence="1">Belongs to the UPF0246 family.</text>
</comment>
<dbReference type="EMBL" id="CP001321">
    <property type="protein sequence ID" value="ACL31968.1"/>
    <property type="molecule type" value="Genomic_DNA"/>
</dbReference>
<dbReference type="RefSeq" id="WP_012621650.1">
    <property type="nucleotide sequence ID" value="NC_011852.1"/>
</dbReference>
<dbReference type="SMR" id="B8F3R6"/>
<dbReference type="STRING" id="557723.HAPS_0280"/>
<dbReference type="KEGG" id="hap:HAPS_0280"/>
<dbReference type="PATRIC" id="fig|557723.8.peg.287"/>
<dbReference type="HOGENOM" id="CLU_061989_0_0_6"/>
<dbReference type="Proteomes" id="UP000006743">
    <property type="component" value="Chromosome"/>
</dbReference>
<dbReference type="GO" id="GO:0005829">
    <property type="term" value="C:cytosol"/>
    <property type="evidence" value="ECO:0007669"/>
    <property type="project" value="TreeGrafter"/>
</dbReference>
<dbReference type="GO" id="GO:0033194">
    <property type="term" value="P:response to hydroperoxide"/>
    <property type="evidence" value="ECO:0007669"/>
    <property type="project" value="TreeGrafter"/>
</dbReference>
<dbReference type="HAMAP" id="MF_00652">
    <property type="entry name" value="UPF0246"/>
    <property type="match status" value="1"/>
</dbReference>
<dbReference type="InterPro" id="IPR005583">
    <property type="entry name" value="YaaA"/>
</dbReference>
<dbReference type="NCBIfam" id="NF002541">
    <property type="entry name" value="PRK02101.1-1"/>
    <property type="match status" value="1"/>
</dbReference>
<dbReference type="NCBIfam" id="NF002542">
    <property type="entry name" value="PRK02101.1-3"/>
    <property type="match status" value="1"/>
</dbReference>
<dbReference type="PANTHER" id="PTHR30283:SF4">
    <property type="entry name" value="PEROXIDE STRESS RESISTANCE PROTEIN YAAA"/>
    <property type="match status" value="1"/>
</dbReference>
<dbReference type="PANTHER" id="PTHR30283">
    <property type="entry name" value="PEROXIDE STRESS RESPONSE PROTEIN YAAA"/>
    <property type="match status" value="1"/>
</dbReference>
<dbReference type="Pfam" id="PF03883">
    <property type="entry name" value="H2O2_YaaD"/>
    <property type="match status" value="1"/>
</dbReference>
<gene>
    <name type="ordered locus">HAPS_0280</name>
</gene>
<name>Y280_GLAP5</name>
<organism>
    <name type="scientific">Glaesserella parasuis serovar 5 (strain SH0165)</name>
    <name type="common">Haemophilus parasuis</name>
    <dbReference type="NCBI Taxonomy" id="557723"/>
    <lineage>
        <taxon>Bacteria</taxon>
        <taxon>Pseudomonadati</taxon>
        <taxon>Pseudomonadota</taxon>
        <taxon>Gammaproteobacteria</taxon>
        <taxon>Pasteurellales</taxon>
        <taxon>Pasteurellaceae</taxon>
        <taxon>Glaesserella</taxon>
    </lineage>
</organism>
<accession>B8F3R6</accession>
<feature type="chain" id="PRO_1000200421" description="UPF0246 protein HAPS_0280">
    <location>
        <begin position="1"/>
        <end position="257"/>
    </location>
</feature>
<sequence length="257" mass="29268">MLAIISPAKTLDFETKIDGFVFSQPELTAYSQQLIDICKQFSPAEVASLMSISDKLASLNVARFAEWTMEHNEQNAKAALFAFKGDVYTGLEAETLTNAEIDYAQRHLRMLSGLYGLLKPLDLMQPYRLEMGTKLANPKGKDLYHFWDNIITQHLQQAIDAQEDNILVNLASDEYFGAVQAERLTAKIVKPVFLDEKNGKYKVISFYAKKARGMMVRFMLQTQPTSIEQLKAFNYGGYWFDETASTDTELVFKREEQ</sequence>
<keyword id="KW-1185">Reference proteome</keyword>
<proteinExistence type="inferred from homology"/>
<protein>
    <recommendedName>
        <fullName evidence="1">UPF0246 protein HAPS_0280</fullName>
    </recommendedName>
</protein>
<reference key="1">
    <citation type="journal article" date="2009" name="J. Bacteriol.">
        <title>Complete genome sequence of Haemophilus parasuis SH0165.</title>
        <authorList>
            <person name="Yue M."/>
            <person name="Yang F."/>
            <person name="Yang J."/>
            <person name="Bei W."/>
            <person name="Cai X."/>
            <person name="Chen L."/>
            <person name="Dong J."/>
            <person name="Zhou R."/>
            <person name="Jin M."/>
            <person name="Jin Q."/>
            <person name="Chen H."/>
        </authorList>
    </citation>
    <scope>NUCLEOTIDE SEQUENCE [LARGE SCALE GENOMIC DNA]</scope>
    <source>
        <strain>SH0165</strain>
    </source>
</reference>